<sequence length="282" mass="32571">MSSYANHQALAGLTLGKSTDYRDTYDASLLQGVPRSLNRDPLGLKADNLPFHGTDIWTLYELSWLNAKGLPQVAVGHVELDYTSVNLIESKSFKLYLNSFNQTRFNNWDEVRQTLERDLSTCAQGKISVALYRLDELEGQPIGHFNGTCIDDQDITIDNYEFTTDYLENATSGEKVVEETLVSHLLKSNCLITHQPDWGSIQIQYRGRQIDREKLLRYLVSFRHHNEFHEQCVERIFNDLLRFCQPEKLSVYARYTRRGGLDINPWRSNSDFVPSTTRLVRQ</sequence>
<comment type="function">
    <text evidence="1">Catalyzes the NADPH-dependent reduction of 7-cyano-7-deazaguanine (preQ0) to 7-aminomethyl-7-deazaguanine (preQ1).</text>
</comment>
<comment type="catalytic activity">
    <reaction evidence="1">
        <text>7-aminomethyl-7-carbaguanine + 2 NADP(+) = 7-cyano-7-deazaguanine + 2 NADPH + 3 H(+)</text>
        <dbReference type="Rhea" id="RHEA:13409"/>
        <dbReference type="ChEBI" id="CHEBI:15378"/>
        <dbReference type="ChEBI" id="CHEBI:45075"/>
        <dbReference type="ChEBI" id="CHEBI:57783"/>
        <dbReference type="ChEBI" id="CHEBI:58349"/>
        <dbReference type="ChEBI" id="CHEBI:58703"/>
        <dbReference type="EC" id="1.7.1.13"/>
    </reaction>
</comment>
<comment type="pathway">
    <text evidence="1">tRNA modification; tRNA-queuosine biosynthesis.</text>
</comment>
<comment type="subunit">
    <text evidence="1">Homodimer.</text>
</comment>
<comment type="subcellular location">
    <subcellularLocation>
        <location evidence="1">Cytoplasm</location>
    </subcellularLocation>
</comment>
<comment type="similarity">
    <text evidence="1">Belongs to the GTP cyclohydrolase I family. QueF type 2 subfamily.</text>
</comment>
<protein>
    <recommendedName>
        <fullName evidence="1">NADPH-dependent 7-cyano-7-deazaguanine reductase</fullName>
        <ecNumber evidence="1">1.7.1.13</ecNumber>
    </recommendedName>
    <alternativeName>
        <fullName evidence="1">7-cyano-7-carbaguanine reductase</fullName>
    </alternativeName>
    <alternativeName>
        <fullName evidence="1">NADPH-dependent nitrile oxidoreductase</fullName>
    </alternativeName>
    <alternativeName>
        <fullName evidence="1">PreQ(0) reductase</fullName>
    </alternativeName>
</protein>
<reference key="1">
    <citation type="journal article" date="2006" name="BMC Genomics">
        <title>Complete genome sequence of Shigella flexneri 5b and comparison with Shigella flexneri 2a.</title>
        <authorList>
            <person name="Nie H."/>
            <person name="Yang F."/>
            <person name="Zhang X."/>
            <person name="Yang J."/>
            <person name="Chen L."/>
            <person name="Wang J."/>
            <person name="Xiong Z."/>
            <person name="Peng J."/>
            <person name="Sun L."/>
            <person name="Dong J."/>
            <person name="Xue Y."/>
            <person name="Xu X."/>
            <person name="Chen S."/>
            <person name="Yao Z."/>
            <person name="Shen Y."/>
            <person name="Jin Q."/>
        </authorList>
    </citation>
    <scope>NUCLEOTIDE SEQUENCE [LARGE SCALE GENOMIC DNA]</scope>
    <source>
        <strain>8401</strain>
    </source>
</reference>
<gene>
    <name evidence="1" type="primary">queF</name>
    <name type="ordered locus">SFV_2663</name>
</gene>
<evidence type="ECO:0000255" key="1">
    <source>
        <dbReference type="HAMAP-Rule" id="MF_00817"/>
    </source>
</evidence>
<accession>Q0T1R0</accession>
<keyword id="KW-0963">Cytoplasm</keyword>
<keyword id="KW-0521">NADP</keyword>
<keyword id="KW-0560">Oxidoreductase</keyword>
<keyword id="KW-0671">Queuosine biosynthesis</keyword>
<feature type="chain" id="PRO_1000062365" description="NADPH-dependent 7-cyano-7-deazaguanine reductase">
    <location>
        <begin position="1"/>
        <end position="282"/>
    </location>
</feature>
<feature type="active site" description="Thioimide intermediate" evidence="1">
    <location>
        <position position="190"/>
    </location>
</feature>
<feature type="active site" description="Proton donor" evidence="1">
    <location>
        <position position="197"/>
    </location>
</feature>
<feature type="binding site" evidence="1">
    <location>
        <begin position="88"/>
        <end position="90"/>
    </location>
    <ligand>
        <name>substrate</name>
    </ligand>
</feature>
<feature type="binding site" evidence="1">
    <location>
        <begin position="90"/>
        <end position="91"/>
    </location>
    <ligand>
        <name>NADPH</name>
        <dbReference type="ChEBI" id="CHEBI:57783"/>
    </ligand>
</feature>
<feature type="binding site" evidence="1">
    <location>
        <begin position="229"/>
        <end position="230"/>
    </location>
    <ligand>
        <name>substrate</name>
    </ligand>
</feature>
<feature type="binding site" evidence="1">
    <location>
        <begin position="258"/>
        <end position="259"/>
    </location>
    <ligand>
        <name>NADPH</name>
        <dbReference type="ChEBI" id="CHEBI:57783"/>
    </ligand>
</feature>
<dbReference type="EC" id="1.7.1.13" evidence="1"/>
<dbReference type="EMBL" id="CP000266">
    <property type="protein sequence ID" value="ABF04755.1"/>
    <property type="molecule type" value="Genomic_DNA"/>
</dbReference>
<dbReference type="RefSeq" id="WP_000100422.1">
    <property type="nucleotide sequence ID" value="NC_008258.1"/>
</dbReference>
<dbReference type="SMR" id="Q0T1R0"/>
<dbReference type="KEGG" id="sfv:SFV_2663"/>
<dbReference type="HOGENOM" id="CLU_054738_0_0_6"/>
<dbReference type="UniPathway" id="UPA00392"/>
<dbReference type="Proteomes" id="UP000000659">
    <property type="component" value="Chromosome"/>
</dbReference>
<dbReference type="GO" id="GO:0005737">
    <property type="term" value="C:cytoplasm"/>
    <property type="evidence" value="ECO:0007669"/>
    <property type="project" value="UniProtKB-SubCell"/>
</dbReference>
<dbReference type="GO" id="GO:0033739">
    <property type="term" value="F:preQ1 synthase activity"/>
    <property type="evidence" value="ECO:0007669"/>
    <property type="project" value="UniProtKB-UniRule"/>
</dbReference>
<dbReference type="GO" id="GO:0008616">
    <property type="term" value="P:queuosine biosynthetic process"/>
    <property type="evidence" value="ECO:0007669"/>
    <property type="project" value="UniProtKB-UniRule"/>
</dbReference>
<dbReference type="GO" id="GO:0006400">
    <property type="term" value="P:tRNA modification"/>
    <property type="evidence" value="ECO:0007669"/>
    <property type="project" value="UniProtKB-UniRule"/>
</dbReference>
<dbReference type="FunFam" id="3.30.1130.10:FF:000004">
    <property type="entry name" value="NADPH-dependent 7-cyano-7-deazaguanine reductase"/>
    <property type="match status" value="1"/>
</dbReference>
<dbReference type="FunFam" id="3.30.1130.10:FF:000006">
    <property type="entry name" value="NADPH-dependent 7-cyano-7-deazaguanine reductase"/>
    <property type="match status" value="1"/>
</dbReference>
<dbReference type="Gene3D" id="3.30.1130.10">
    <property type="match status" value="2"/>
</dbReference>
<dbReference type="HAMAP" id="MF_00817">
    <property type="entry name" value="QueF_type2"/>
    <property type="match status" value="1"/>
</dbReference>
<dbReference type="InterPro" id="IPR043133">
    <property type="entry name" value="GTP-CH-I_C/QueF"/>
</dbReference>
<dbReference type="InterPro" id="IPR050084">
    <property type="entry name" value="NADPH_dep_7-cyano-7-deazaG_red"/>
</dbReference>
<dbReference type="InterPro" id="IPR029500">
    <property type="entry name" value="QueF"/>
</dbReference>
<dbReference type="InterPro" id="IPR029139">
    <property type="entry name" value="QueF_N"/>
</dbReference>
<dbReference type="InterPro" id="IPR016428">
    <property type="entry name" value="QueF_type2"/>
</dbReference>
<dbReference type="NCBIfam" id="TIGR03138">
    <property type="entry name" value="QueF"/>
    <property type="match status" value="1"/>
</dbReference>
<dbReference type="PANTHER" id="PTHR34354">
    <property type="entry name" value="NADPH-DEPENDENT 7-CYANO-7-DEAZAGUANINE REDUCTASE"/>
    <property type="match status" value="1"/>
</dbReference>
<dbReference type="PANTHER" id="PTHR34354:SF1">
    <property type="entry name" value="NADPH-DEPENDENT 7-CYANO-7-DEAZAGUANINE REDUCTASE"/>
    <property type="match status" value="1"/>
</dbReference>
<dbReference type="Pfam" id="PF14489">
    <property type="entry name" value="QueF"/>
    <property type="match status" value="1"/>
</dbReference>
<dbReference type="Pfam" id="PF14819">
    <property type="entry name" value="QueF_N"/>
    <property type="match status" value="1"/>
</dbReference>
<dbReference type="PIRSF" id="PIRSF004750">
    <property type="entry name" value="Nitrile_oxidored_YqcD_prd"/>
    <property type="match status" value="1"/>
</dbReference>
<dbReference type="SUPFAM" id="SSF55620">
    <property type="entry name" value="Tetrahydrobiopterin biosynthesis enzymes-like"/>
    <property type="match status" value="1"/>
</dbReference>
<proteinExistence type="inferred from homology"/>
<name>QUEF_SHIF8</name>
<organism>
    <name type="scientific">Shigella flexneri serotype 5b (strain 8401)</name>
    <dbReference type="NCBI Taxonomy" id="373384"/>
    <lineage>
        <taxon>Bacteria</taxon>
        <taxon>Pseudomonadati</taxon>
        <taxon>Pseudomonadota</taxon>
        <taxon>Gammaproteobacteria</taxon>
        <taxon>Enterobacterales</taxon>
        <taxon>Enterobacteriaceae</taxon>
        <taxon>Shigella</taxon>
    </lineage>
</organism>